<evidence type="ECO:0000250" key="1"/>
<evidence type="ECO:0000255" key="2"/>
<evidence type="ECO:0000255" key="3">
    <source>
        <dbReference type="PROSITE-ProRule" id="PRU00274"/>
    </source>
</evidence>
<sequence length="261" mass="28820">MWVLVVFLTLSVTWIGAAPLILSRIVGGWECEKHSQPWQVLVASHGRAVCGGVLVHPQWVLTAAHCIRSHSVILLGRHNPYYPEDTGQVFQVSHSFPHPLYNMSLLKNRYLGPGDDSSHDLMLLRLSEPAEITDAVQVLDLPTWEPELGTTCYASGWGSIEPEEHLTPKKLQCVDLHIISNDVCAQVHSQKVTKFMLCAGSWMGGKSTCSGDSGGPLVCDGVLQGITSWGSQPCALPRRPSLYTKVVRYRKWIQDTIMANP</sequence>
<gene>
    <name type="primary">KLK3</name>
    <name type="synonym">APS</name>
</gene>
<comment type="function">
    <text evidence="1">Hydrolyzes semenogelin-1 thus leading to the liquefaction of the seminal coagulum.</text>
</comment>
<comment type="catalytic activity">
    <reaction>
        <text>Preferential cleavage: -Tyr-|-Xaa-.</text>
        <dbReference type="EC" id="3.4.21.77"/>
    </reaction>
</comment>
<comment type="activity regulation">
    <text evidence="1">Inhibited by SERPINA5. Activity is strongly inhibited by Zn2+, 100 times more abundant in semen than in serum. This inhibition is relieved by exposure to semenogelins, which are avid zinc binders (By similarity).</text>
</comment>
<comment type="subunit">
    <text evidence="1">Forms a heterodimer with SERPINA5.</text>
</comment>
<comment type="subcellular location">
    <subcellularLocation>
        <location evidence="1">Secreted</location>
    </subcellularLocation>
</comment>
<comment type="similarity">
    <text evidence="3">Belongs to the peptidase S1 family. Kallikrein subfamily.</text>
</comment>
<name>KLK3_MACFA</name>
<feature type="signal peptide" evidence="2">
    <location>
        <begin position="1"/>
        <end position="18"/>
    </location>
</feature>
<feature type="propeptide" id="PRO_0000027933" description="Activation peptide">
    <location>
        <begin position="19"/>
        <end position="24"/>
    </location>
</feature>
<feature type="chain" id="PRO_0000027934" description="Prostate-specific antigen">
    <location>
        <begin position="25"/>
        <end position="261"/>
    </location>
</feature>
<feature type="domain" description="Peptidase S1" evidence="3">
    <location>
        <begin position="25"/>
        <end position="258"/>
    </location>
</feature>
<feature type="active site" description="Charge relay system" evidence="1">
    <location>
        <position position="65"/>
    </location>
</feature>
<feature type="active site" description="Charge relay system" evidence="1">
    <location>
        <position position="120"/>
    </location>
</feature>
<feature type="active site" description="Charge relay system" evidence="1">
    <location>
        <position position="213"/>
    </location>
</feature>
<feature type="glycosylation site" description="N-linked (GlcNAc...) asparagine" evidence="2">
    <location>
        <position position="102"/>
    </location>
</feature>
<feature type="disulfide bond" evidence="3">
    <location>
        <begin position="31"/>
        <end position="173"/>
    </location>
</feature>
<feature type="disulfide bond" evidence="3">
    <location>
        <begin position="50"/>
        <end position="66"/>
    </location>
</feature>
<feature type="disulfide bond" evidence="3">
    <location>
        <begin position="152"/>
        <end position="219"/>
    </location>
</feature>
<feature type="disulfide bond" evidence="3">
    <location>
        <begin position="184"/>
        <end position="198"/>
    </location>
</feature>
<feature type="disulfide bond" evidence="3">
    <location>
        <begin position="209"/>
        <end position="234"/>
    </location>
</feature>
<keyword id="KW-1015">Disulfide bond</keyword>
<keyword id="KW-0325">Glycoprotein</keyword>
<keyword id="KW-0378">Hydrolase</keyword>
<keyword id="KW-0645">Protease</keyword>
<keyword id="KW-1185">Reference proteome</keyword>
<keyword id="KW-0964">Secreted</keyword>
<keyword id="KW-0720">Serine protease</keyword>
<keyword id="KW-0732">Signal</keyword>
<keyword id="KW-0865">Zymogen</keyword>
<organism>
    <name type="scientific">Macaca fascicularis</name>
    <name type="common">Crab-eating macaque</name>
    <name type="synonym">Cynomolgus monkey</name>
    <dbReference type="NCBI Taxonomy" id="9541"/>
    <lineage>
        <taxon>Eukaryota</taxon>
        <taxon>Metazoa</taxon>
        <taxon>Chordata</taxon>
        <taxon>Craniata</taxon>
        <taxon>Vertebrata</taxon>
        <taxon>Euteleostomi</taxon>
        <taxon>Mammalia</taxon>
        <taxon>Eutheria</taxon>
        <taxon>Euarchontoglires</taxon>
        <taxon>Primates</taxon>
        <taxon>Haplorrhini</taxon>
        <taxon>Catarrhini</taxon>
        <taxon>Cercopithecidae</taxon>
        <taxon>Cercopithecinae</taxon>
        <taxon>Macaca</taxon>
    </lineage>
</organism>
<protein>
    <recommendedName>
        <fullName>Prostate-specific antigen</fullName>
        <shortName>PSA</shortName>
        <ecNumber>3.4.21.77</ecNumber>
    </recommendedName>
    <alternativeName>
        <fullName>Kallikrein-3</fullName>
    </alternativeName>
    <alternativeName>
        <fullName>Semenogelase</fullName>
    </alternativeName>
</protein>
<dbReference type="EC" id="3.4.21.77"/>
<dbReference type="EMBL" id="AY647976">
    <property type="protein sequence ID" value="AAT68459.1"/>
    <property type="molecule type" value="mRNA"/>
</dbReference>
<dbReference type="SMR" id="Q6DT45"/>
<dbReference type="STRING" id="9541.ENSMFAP00000042152"/>
<dbReference type="GlyCosmos" id="Q6DT45">
    <property type="glycosylation" value="1 site, No reported glycans"/>
</dbReference>
<dbReference type="eggNOG" id="KOG3627">
    <property type="taxonomic scope" value="Eukaryota"/>
</dbReference>
<dbReference type="Proteomes" id="UP000233100">
    <property type="component" value="Unplaced"/>
</dbReference>
<dbReference type="GO" id="GO:0005576">
    <property type="term" value="C:extracellular region"/>
    <property type="evidence" value="ECO:0007669"/>
    <property type="project" value="UniProtKB-SubCell"/>
</dbReference>
<dbReference type="GO" id="GO:0030141">
    <property type="term" value="C:secretory granule"/>
    <property type="evidence" value="ECO:0007669"/>
    <property type="project" value="TreeGrafter"/>
</dbReference>
<dbReference type="GO" id="GO:0004252">
    <property type="term" value="F:serine-type endopeptidase activity"/>
    <property type="evidence" value="ECO:0007669"/>
    <property type="project" value="InterPro"/>
</dbReference>
<dbReference type="GO" id="GO:0003073">
    <property type="term" value="P:regulation of systemic arterial blood pressure"/>
    <property type="evidence" value="ECO:0007669"/>
    <property type="project" value="TreeGrafter"/>
</dbReference>
<dbReference type="GO" id="GO:0031638">
    <property type="term" value="P:zymogen activation"/>
    <property type="evidence" value="ECO:0007669"/>
    <property type="project" value="TreeGrafter"/>
</dbReference>
<dbReference type="CDD" id="cd00190">
    <property type="entry name" value="Tryp_SPc"/>
    <property type="match status" value="1"/>
</dbReference>
<dbReference type="FunFam" id="2.40.10.10:FF:000042">
    <property type="entry name" value="Kallikrein 1-related peptidase C9"/>
    <property type="match status" value="1"/>
</dbReference>
<dbReference type="Gene3D" id="2.40.10.10">
    <property type="entry name" value="Trypsin-like serine proteases"/>
    <property type="match status" value="2"/>
</dbReference>
<dbReference type="InterPro" id="IPR009003">
    <property type="entry name" value="Peptidase_S1_PA"/>
</dbReference>
<dbReference type="InterPro" id="IPR043504">
    <property type="entry name" value="Peptidase_S1_PA_chymotrypsin"/>
</dbReference>
<dbReference type="InterPro" id="IPR001314">
    <property type="entry name" value="Peptidase_S1A"/>
</dbReference>
<dbReference type="InterPro" id="IPR001254">
    <property type="entry name" value="Trypsin_dom"/>
</dbReference>
<dbReference type="InterPro" id="IPR018114">
    <property type="entry name" value="TRYPSIN_HIS"/>
</dbReference>
<dbReference type="InterPro" id="IPR033116">
    <property type="entry name" value="TRYPSIN_SER"/>
</dbReference>
<dbReference type="PANTHER" id="PTHR24271">
    <property type="entry name" value="KALLIKREIN-RELATED"/>
    <property type="match status" value="1"/>
</dbReference>
<dbReference type="PANTHER" id="PTHR24271:SF73">
    <property type="entry name" value="PROSTATE-SPECIFIC ANTIGEN"/>
    <property type="match status" value="1"/>
</dbReference>
<dbReference type="Pfam" id="PF00089">
    <property type="entry name" value="Trypsin"/>
    <property type="match status" value="1"/>
</dbReference>
<dbReference type="PRINTS" id="PR00722">
    <property type="entry name" value="CHYMOTRYPSIN"/>
</dbReference>
<dbReference type="SMART" id="SM00020">
    <property type="entry name" value="Tryp_SPc"/>
    <property type="match status" value="1"/>
</dbReference>
<dbReference type="SUPFAM" id="SSF50494">
    <property type="entry name" value="Trypsin-like serine proteases"/>
    <property type="match status" value="1"/>
</dbReference>
<dbReference type="PROSITE" id="PS50240">
    <property type="entry name" value="TRYPSIN_DOM"/>
    <property type="match status" value="1"/>
</dbReference>
<dbReference type="PROSITE" id="PS00134">
    <property type="entry name" value="TRYPSIN_HIS"/>
    <property type="match status" value="1"/>
</dbReference>
<dbReference type="PROSITE" id="PS00135">
    <property type="entry name" value="TRYPSIN_SER"/>
    <property type="match status" value="1"/>
</dbReference>
<accession>Q6DT45</accession>
<reference key="1">
    <citation type="journal article" date="2006" name="J. Med. Primatol.">
        <title>Cloning and sequencing of the cynomolgus monkey prostate specific antigen cDNA.</title>
        <authorList>
            <person name="Marshall D.J."/>
            <person name="Rudnick K.A."/>
            <person name="Lu J."/>
            <person name="Snyder L.A."/>
        </authorList>
    </citation>
    <scope>NUCLEOTIDE SEQUENCE [MRNA]</scope>
</reference>
<proteinExistence type="evidence at transcript level"/>